<gene>
    <name type="primary">FAM114A1</name>
</gene>
<feature type="chain" id="PRO_0000274563" description="Protein FAM114A2">
    <location>
        <begin position="1"/>
        <end position="500"/>
    </location>
</feature>
<feature type="region of interest" description="Disordered" evidence="2">
    <location>
        <begin position="1"/>
        <end position="82"/>
    </location>
</feature>
<feature type="modified residue" description="Phosphoserine" evidence="1">
    <location>
        <position position="93"/>
    </location>
</feature>
<feature type="modified residue" description="Phosphoserine" evidence="1">
    <location>
        <position position="152"/>
    </location>
</feature>
<feature type="modified residue" description="Phosphoserine" evidence="1">
    <location>
        <position position="215"/>
    </location>
</feature>
<dbReference type="EMBL" id="BC111346">
    <property type="protein sequence ID" value="AAI11347.1"/>
    <property type="molecule type" value="mRNA"/>
</dbReference>
<dbReference type="RefSeq" id="NP_001033166.1">
    <property type="nucleotide sequence ID" value="NM_001038077.1"/>
</dbReference>
<dbReference type="SMR" id="Q2T9N1"/>
<dbReference type="FunCoup" id="Q2T9N1">
    <property type="interactions" value="3187"/>
</dbReference>
<dbReference type="STRING" id="9913.ENSBTAP00000067038"/>
<dbReference type="PaxDb" id="9913-ENSBTAP00000035006"/>
<dbReference type="GeneID" id="511198"/>
<dbReference type="KEGG" id="bta:511198"/>
<dbReference type="CTD" id="10827"/>
<dbReference type="eggNOG" id="ENOG502QS74">
    <property type="taxonomic scope" value="Eukaryota"/>
</dbReference>
<dbReference type="InParanoid" id="Q2T9N1"/>
<dbReference type="OrthoDB" id="5597648at2759"/>
<dbReference type="Proteomes" id="UP000009136">
    <property type="component" value="Unplaced"/>
</dbReference>
<dbReference type="InterPro" id="IPR007998">
    <property type="entry name" value="DUF719"/>
</dbReference>
<dbReference type="PANTHER" id="PTHR12842">
    <property type="entry name" value="FI01459P"/>
    <property type="match status" value="1"/>
</dbReference>
<dbReference type="PANTHER" id="PTHR12842:SF3">
    <property type="entry name" value="PROTEIN FAM114A2"/>
    <property type="match status" value="1"/>
</dbReference>
<dbReference type="Pfam" id="PF05334">
    <property type="entry name" value="DUF719"/>
    <property type="match status" value="1"/>
</dbReference>
<organism>
    <name type="scientific">Bos taurus</name>
    <name type="common">Bovine</name>
    <dbReference type="NCBI Taxonomy" id="9913"/>
    <lineage>
        <taxon>Eukaryota</taxon>
        <taxon>Metazoa</taxon>
        <taxon>Chordata</taxon>
        <taxon>Craniata</taxon>
        <taxon>Vertebrata</taxon>
        <taxon>Euteleostomi</taxon>
        <taxon>Mammalia</taxon>
        <taxon>Eutheria</taxon>
        <taxon>Laurasiatheria</taxon>
        <taxon>Artiodactyla</taxon>
        <taxon>Ruminantia</taxon>
        <taxon>Pecora</taxon>
        <taxon>Bovidae</taxon>
        <taxon>Bovinae</taxon>
        <taxon>Bos</taxon>
    </lineage>
</organism>
<proteinExistence type="evidence at transcript level"/>
<name>F1142_BOVIN</name>
<accession>Q2T9N1</accession>
<sequence>MSNKDDLETAVITEATPIREDENCEPVKNFESVDQSAKSESKSEPVASTRKRPESKPSSDLETEVLPVQASQAAGKETVSKDVPQSGWGYWGSWGKSLLSSASATVATVGQGISNVIEKAETSLGIPSPSEISTEVQYATGETSAKENGNSSPMSGPFGVFSTISTAVQSTGKSVISGGLDALEFIGKKTMDVIAEGDPGFKRTKGLMNRTSTLSQVLREAKEKEELWTSNEVTMETDKKTHYGLLFDEFQGLSHLEALEMLSRESEIKVKSILNSLSGEELETLKLELEQLKEAFSLAELCEEEEEEKKGGEDFTKEITELFSQLHVSSKPEKLARARNTAYEWIRTSLAKPLKEKEEGEKQLEAENTEQINNKSIEDIHAFAIRSLAELTACSIELFHKTAALVLHGRKQEVTTIERSRALCQMTVLLCKELSCLSKEFTTCLTTAGVKEKADVLNPLITAVFLEASNSASYIQDAFQLLLPVLEISFIENKTELPEA</sequence>
<evidence type="ECO:0000250" key="1">
    <source>
        <dbReference type="UniProtKB" id="Q9NRY5"/>
    </source>
</evidence>
<evidence type="ECO:0000256" key="2">
    <source>
        <dbReference type="SAM" id="MobiDB-lite"/>
    </source>
</evidence>
<evidence type="ECO:0000305" key="3"/>
<keyword id="KW-0597">Phosphoprotein</keyword>
<keyword id="KW-1185">Reference proteome</keyword>
<protein>
    <recommendedName>
        <fullName>Protein FAM114A2</fullName>
    </recommendedName>
</protein>
<comment type="similarity">
    <text evidence="3">Belongs to the FAM114 family.</text>
</comment>
<reference key="1">
    <citation type="submission" date="2005-12" db="EMBL/GenBank/DDBJ databases">
        <authorList>
            <consortium name="NIH - Mammalian Gene Collection (MGC) project"/>
        </authorList>
    </citation>
    <scope>NUCLEOTIDE SEQUENCE [LARGE SCALE MRNA]</scope>
    <source>
        <strain>Crossbred X Angus</strain>
        <tissue>Liver</tissue>
    </source>
</reference>